<evidence type="ECO:0000269" key="1">
    <source>
    </source>
</evidence>
<evidence type="ECO:0000269" key="2">
    <source>
    </source>
</evidence>
<evidence type="ECO:0000269" key="3">
    <source>
    </source>
</evidence>
<evidence type="ECO:0000269" key="4">
    <source>
    </source>
</evidence>
<evidence type="ECO:0000303" key="5">
    <source>
    </source>
</evidence>
<evidence type="ECO:0000303" key="6">
    <source>
    </source>
</evidence>
<evidence type="ECO:0000305" key="7"/>
<evidence type="ECO:0000305" key="8">
    <source>
    </source>
</evidence>
<evidence type="ECO:0000305" key="9">
    <source>
    </source>
</evidence>
<evidence type="ECO:0007744" key="10">
    <source>
    </source>
</evidence>
<protein>
    <recommendedName>
        <fullName evidence="5">Large ribosomal subunit protein uL14B</fullName>
    </recommendedName>
    <alternativeName>
        <fullName evidence="6">60S ribosomal protein L23-B</fullName>
    </alternativeName>
    <alternativeName>
        <fullName>L17a</fullName>
    </alternativeName>
    <alternativeName>
        <fullName>YL32</fullName>
    </alternativeName>
</protein>
<comment type="function">
    <text evidence="8">Component of the ribosome, a large ribonucleoprotein complex responsible for the synthesis of proteins in the cell. The small ribosomal subunit (SSU) binds messenger RNAs (mRNAs) and translates the encoded message by selecting cognate aminoacyl-transfer RNA (tRNA) molecules. The large subunit (LSU) contains the ribosomal catalytic site termed the peptidyl transferase center (PTC), which catalyzes the formation of peptide bonds, thereby polymerizing the amino acids delivered by tRNAs into a polypeptide chain. The nascent polypeptides leave the ribosome through a tunnel in the LSU and interact with protein factors that function in enzymatic processing, targeting, and the membrane insertion of nascent chains at the exit of the ribosomal tunnel.</text>
</comment>
<comment type="subunit">
    <text evidence="4 9">Component of the large ribosomal subunit (LSU). Mature yeast ribosomes consist of a small (40S) and a large (60S) subunit. The 40S small subunit contains 1 molecule of ribosomal RNA (18S rRNA) and 33 different proteins (encoded by 57 genes). The large 60S subunit contains 3 rRNA molecules (25S, 5.8S and 5S rRNA) and 46 different proteins (encoded by 81 genes) (PubMed:22096102, PubMed:9559554).</text>
</comment>
<comment type="subcellular location">
    <subcellularLocation>
        <location evidence="4">Cytoplasm</location>
    </subcellularLocation>
</comment>
<comment type="PTM">
    <text evidence="2">Methylated by RKM1 at 2 different sites, but it is unclear which are the 2 methylated residues among Lys-40, Lys-106 and/or Lys-110.</text>
</comment>
<comment type="mass spectrometry">
    <text>Monoisotopic mass with either 7 methylation modifications or 1 acetylation and 4 methylation modifications.</text>
</comment>
<comment type="miscellaneous">
    <text evidence="7">There are 2 genes for uL14 in yeast.</text>
</comment>
<comment type="similarity">
    <text evidence="7">Belongs to the universal ribosomal protein uL14 family.</text>
</comment>
<accession>P0CX42</accession>
<accession>D3DM23</accession>
<accession>P04451</accession>
<organism>
    <name type="scientific">Saccharomyces cerevisiae (strain ATCC 204508 / S288c)</name>
    <name type="common">Baker's yeast</name>
    <dbReference type="NCBI Taxonomy" id="559292"/>
    <lineage>
        <taxon>Eukaryota</taxon>
        <taxon>Fungi</taxon>
        <taxon>Dikarya</taxon>
        <taxon>Ascomycota</taxon>
        <taxon>Saccharomycotina</taxon>
        <taxon>Saccharomycetes</taxon>
        <taxon>Saccharomycetales</taxon>
        <taxon>Saccharomycetaceae</taxon>
        <taxon>Saccharomyces</taxon>
    </lineage>
</organism>
<feature type="initiator methionine" description="Removed" evidence="2 10">
    <location>
        <position position="1"/>
    </location>
</feature>
<feature type="chain" id="PRO_0000409767" description="Large ribosomal subunit protein uL14B">
    <location>
        <begin position="2"/>
        <end position="137"/>
    </location>
</feature>
<feature type="modified residue" description="N-acetylserine" evidence="2 10">
    <location>
        <position position="2"/>
    </location>
</feature>
<feature type="modified residue" description="N6,N6-dimethyllysine; by RKM1" evidence="3">
    <location>
        <position position="106"/>
    </location>
</feature>
<feature type="modified residue" description="N6,N6-dimethyllysine; by RKM1" evidence="3">
    <location>
        <position position="110"/>
    </location>
</feature>
<gene>
    <name evidence="6" type="primary">RPL23B</name>
    <name type="synonym">RPL17AB</name>
    <name type="synonym">RPL17B</name>
    <name type="ordered locus">YER117W</name>
</gene>
<reference key="1">
    <citation type="journal article" date="1995" name="Yeast">
        <title>Sequence, map position and genome organization of the RPL17B gene, encoding ribosomal protein L17b in Saccharomyces cerevisiae.</title>
        <authorList>
            <person name="Berroteran R.W."/>
            <person name="Hampsey M."/>
        </authorList>
    </citation>
    <scope>NUCLEOTIDE SEQUENCE [GENOMIC DNA]</scope>
</reference>
<reference key="2">
    <citation type="journal article" date="1996" name="Yeast">
        <authorList>
            <person name="Berroteran R.W."/>
            <person name="Hampsey M."/>
        </authorList>
    </citation>
    <scope>ERRATUM OF PUBMED:7668045</scope>
</reference>
<reference key="3">
    <citation type="journal article" date="1995" name="Yeast">
        <title>Sequence analysis of a 78.6 kb segment of the left end of Saccharomyces cerevisiae chromosome II.</title>
        <authorList>
            <person name="Obermaier B."/>
            <person name="Gassenhuber J."/>
            <person name="Piravandi E."/>
            <person name="Domdey H."/>
        </authorList>
    </citation>
    <scope>NUCLEOTIDE SEQUENCE [GENOMIC DNA] (RPL23A)</scope>
    <source>
        <strain>ATCC 204508 / S288c</strain>
    </source>
</reference>
<reference key="4">
    <citation type="journal article" date="1997" name="Nature">
        <title>The nucleotide sequence of Saccharomyces cerevisiae chromosome V.</title>
        <authorList>
            <person name="Dietrich F.S."/>
            <person name="Mulligan J.T."/>
            <person name="Hennessy K.M."/>
            <person name="Yelton M.A."/>
            <person name="Allen E."/>
            <person name="Araujo R."/>
            <person name="Aviles E."/>
            <person name="Berno A."/>
            <person name="Brennan T."/>
            <person name="Carpenter J."/>
            <person name="Chen E."/>
            <person name="Cherry J.M."/>
            <person name="Chung E."/>
            <person name="Duncan M."/>
            <person name="Guzman E."/>
            <person name="Hartzell G."/>
            <person name="Hunicke-Smith S."/>
            <person name="Hyman R.W."/>
            <person name="Kayser A."/>
            <person name="Komp C."/>
            <person name="Lashkari D."/>
            <person name="Lew H."/>
            <person name="Lin D."/>
            <person name="Mosedale D."/>
            <person name="Nakahara K."/>
            <person name="Namath A."/>
            <person name="Norgren R."/>
            <person name="Oefner P."/>
            <person name="Oh C."/>
            <person name="Petel F.X."/>
            <person name="Roberts D."/>
            <person name="Sehl P."/>
            <person name="Schramm S."/>
            <person name="Shogren T."/>
            <person name="Smith V."/>
            <person name="Taylor P."/>
            <person name="Wei Y."/>
            <person name="Botstein D."/>
            <person name="Davis R.W."/>
        </authorList>
    </citation>
    <scope>NUCLEOTIDE SEQUENCE [LARGE SCALE GENOMIC DNA]</scope>
    <source>
        <strain>ATCC 204508 / S288c</strain>
    </source>
</reference>
<reference key="5">
    <citation type="journal article" date="2014" name="G3 (Bethesda)">
        <title>The reference genome sequence of Saccharomyces cerevisiae: Then and now.</title>
        <authorList>
            <person name="Engel S.R."/>
            <person name="Dietrich F.S."/>
            <person name="Fisk D.G."/>
            <person name="Binkley G."/>
            <person name="Balakrishnan R."/>
            <person name="Costanzo M.C."/>
            <person name="Dwight S.S."/>
            <person name="Hitz B.C."/>
            <person name="Karra K."/>
            <person name="Nash R.S."/>
            <person name="Weng S."/>
            <person name="Wong E.D."/>
            <person name="Lloyd P."/>
            <person name="Skrzypek M.S."/>
            <person name="Miyasato S.R."/>
            <person name="Simison M."/>
            <person name="Cherry J.M."/>
        </authorList>
    </citation>
    <scope>GENOME REANNOTATION</scope>
    <source>
        <strain>ATCC 204508 / S288c</strain>
    </source>
</reference>
<reference key="6">
    <citation type="journal article" date="1998" name="Yeast">
        <title>The list of cytoplasmic ribosomal proteins of Saccharomyces cerevisiae.</title>
        <authorList>
            <person name="Planta R.J."/>
            <person name="Mager W.H."/>
        </authorList>
    </citation>
    <scope>NOMENCLATURE</scope>
    <scope>SUBUNIT</scope>
</reference>
<reference key="7">
    <citation type="journal article" date="2002" name="Proc. Natl. Acad. Sci. U.S.A.">
        <title>Direct mass spectrometric analysis of intact proteins of the yeast large ribosomal subunit using capillary LC/FTICR.</title>
        <authorList>
            <person name="Lee S.-W."/>
            <person name="Berger S.J."/>
            <person name="Martinovic S."/>
            <person name="Pasa-Tolic L."/>
            <person name="Anderson G.A."/>
            <person name="Shen Y."/>
            <person name="Zhao R."/>
            <person name="Smith R.D."/>
        </authorList>
    </citation>
    <scope>MASS SPECTROMETRY</scope>
</reference>
<reference key="8">
    <citation type="journal article" date="2005" name="J. Biol. Chem.">
        <title>A novel SET domain methyltransferase modifies ribosomal protein Rpl23ab in yeast.</title>
        <authorList>
            <person name="Porras-Yakushi T.R."/>
            <person name="Whitelegge J.P."/>
            <person name="Miranda T.B."/>
            <person name="Clarke S."/>
        </authorList>
    </citation>
    <scope>ACETYLATION AT SER-2</scope>
    <scope>METHYLATION</scope>
</reference>
<reference key="9">
    <citation type="journal article" date="2007" name="J. Biol. Chem.">
        <title>Yeast ribosomal/cytochrome c SET domain methyltransferase subfamily: identification of Rpl23ab methylation sites and recognition motifs.</title>
        <authorList>
            <person name="Porras-Yakushi T.R."/>
            <person name="Whitelegge J.P."/>
            <person name="Clarke S."/>
        </authorList>
    </citation>
    <scope>METHYLATION AT LYS-106 AND LYS-110</scope>
</reference>
<reference key="10">
    <citation type="journal article" date="2011" name="Science">
        <title>The structure of the eukaryotic ribosome at 3.0 A resolution.</title>
        <authorList>
            <person name="Ben-Shem A."/>
            <person name="Garreau de Loubresse N."/>
            <person name="Melnikov S."/>
            <person name="Jenner L."/>
            <person name="Yusupova G."/>
            <person name="Yusupov M."/>
        </authorList>
    </citation>
    <scope>SUBUNIT</scope>
    <scope>SUBCELLULAR LOCATION</scope>
</reference>
<reference key="11">
    <citation type="journal article" date="2012" name="Proc. Natl. Acad. Sci. U.S.A.">
        <title>N-terminal acetylome analyses and functional insights of the N-terminal acetyltransferase NatB.</title>
        <authorList>
            <person name="Van Damme P."/>
            <person name="Lasa M."/>
            <person name="Polevoda B."/>
            <person name="Gazquez C."/>
            <person name="Elosegui-Artola A."/>
            <person name="Kim D.S."/>
            <person name="De Juan-Pardo E."/>
            <person name="Demeyer K."/>
            <person name="Hole K."/>
            <person name="Larrea E."/>
            <person name="Timmerman E."/>
            <person name="Prieto J."/>
            <person name="Arnesen T."/>
            <person name="Sherman F."/>
            <person name="Gevaert K."/>
            <person name="Aldabe R."/>
        </authorList>
    </citation>
    <scope>ACETYLATION [LARGE SCALE ANALYSIS] AT SER-2</scope>
    <scope>CLEAVAGE OF INITIATOR METHIONINE [LARGE SCALE ANALYSIS]</scope>
    <scope>IDENTIFICATION BY MASS SPECTROMETRY [LARGE SCALE ANALYSIS]</scope>
</reference>
<reference key="12">
    <citation type="journal article" date="2014" name="Curr. Opin. Struct. Biol.">
        <title>A new system for naming ribosomal proteins.</title>
        <authorList>
            <person name="Ban N."/>
            <person name="Beckmann R."/>
            <person name="Cate J.H.D."/>
            <person name="Dinman J.D."/>
            <person name="Dragon F."/>
            <person name="Ellis S.R."/>
            <person name="Lafontaine D.L.J."/>
            <person name="Lindahl L."/>
            <person name="Liljas A."/>
            <person name="Lipton J.M."/>
            <person name="McAlear M.A."/>
            <person name="Moore P.B."/>
            <person name="Noller H.F."/>
            <person name="Ortega J."/>
            <person name="Panse V.G."/>
            <person name="Ramakrishnan V."/>
            <person name="Spahn C.M.T."/>
            <person name="Steitz T.A."/>
            <person name="Tchorzewski M."/>
            <person name="Tollervey D."/>
            <person name="Warren A.J."/>
            <person name="Williamson J.R."/>
            <person name="Wilson D."/>
            <person name="Yonath A."/>
            <person name="Yusupov M."/>
        </authorList>
    </citation>
    <scope>NOMENCLATURE</scope>
</reference>
<sequence>MSGNGAQGTKFRISLGLPVGAIMNCADNSGARNLYIIAVKGSGSRLNRLPAASLGDMVMATVKKGKPELRKKVMPAIVVRQAKSWRRRDGVFLYFEDNAGVIANPKGEMKGSAITGPVGKECADLWPRVASNSGVVV</sequence>
<keyword id="KW-0007">Acetylation</keyword>
<keyword id="KW-0963">Cytoplasm</keyword>
<keyword id="KW-0488">Methylation</keyword>
<keyword id="KW-1185">Reference proteome</keyword>
<keyword id="KW-0687">Ribonucleoprotein</keyword>
<keyword id="KW-0689">Ribosomal protein</keyword>
<proteinExistence type="evidence at protein level"/>
<dbReference type="EMBL" id="U15653">
    <property type="protein sequence ID" value="AAA61906.1"/>
    <property type="molecule type" value="Genomic_DNA"/>
</dbReference>
<dbReference type="EMBL" id="U18916">
    <property type="protein sequence ID" value="AAC03215.1"/>
    <property type="molecule type" value="Genomic_DNA"/>
</dbReference>
<dbReference type="EMBL" id="BK006939">
    <property type="protein sequence ID" value="DAA07777.1"/>
    <property type="molecule type" value="Genomic_DNA"/>
</dbReference>
<dbReference type="PIR" id="A02792">
    <property type="entry name" value="R5BY17"/>
</dbReference>
<dbReference type="RefSeq" id="NP_011042.3">
    <property type="nucleotide sequence ID" value="NM_001179007.3"/>
</dbReference>
<dbReference type="SMR" id="P0CX42"/>
<dbReference type="BioGRID" id="32617">
    <property type="interactions" value="279"/>
</dbReference>
<dbReference type="BioGRID" id="36862">
    <property type="interactions" value="177"/>
</dbReference>
<dbReference type="ComplexPortal" id="CPX-1601">
    <property type="entry name" value="60S cytosolic large ribosomal subunit"/>
</dbReference>
<dbReference type="FunCoup" id="P0CX42">
    <property type="interactions" value="1261"/>
</dbReference>
<dbReference type="IntAct" id="P0CX42">
    <property type="interactions" value="5"/>
</dbReference>
<dbReference type="MINT" id="P0CX42"/>
<dbReference type="iPTMnet" id="P0CX42"/>
<dbReference type="EnsemblFungi" id="YBL087C_mRNA">
    <property type="protein sequence ID" value="YBL087C"/>
    <property type="gene ID" value="YBL087C"/>
</dbReference>
<dbReference type="EnsemblFungi" id="YER117W_mRNA">
    <property type="protein sequence ID" value="YER117W"/>
    <property type="gene ID" value="YER117W"/>
</dbReference>
<dbReference type="GeneID" id="856853"/>
<dbReference type="KEGG" id="sce:YBL087C"/>
<dbReference type="KEGG" id="sce:YER117W"/>
<dbReference type="AGR" id="SGD:S000000919"/>
<dbReference type="SGD" id="S000000919">
    <property type="gene designation" value="RPL23B"/>
</dbReference>
<dbReference type="VEuPathDB" id="FungiDB:YBL087C"/>
<dbReference type="VEuPathDB" id="FungiDB:YER117W"/>
<dbReference type="GeneTree" id="ENSGT00390000004690"/>
<dbReference type="HOGENOM" id="CLU_095071_3_0_1"/>
<dbReference type="InParanoid" id="P0CX42"/>
<dbReference type="OMA" id="IRQSKPW"/>
<dbReference type="OrthoDB" id="407959at2759"/>
<dbReference type="BioCyc" id="YEAST:G3O-30281-MONOMER"/>
<dbReference type="Reactome" id="R-SCE-156827">
    <property type="pathway name" value="L13a-mediated translational silencing of Ceruloplasmin expression"/>
</dbReference>
<dbReference type="Reactome" id="R-SCE-1799339">
    <property type="pathway name" value="SRP-dependent cotranslational protein targeting to membrane"/>
</dbReference>
<dbReference type="Reactome" id="R-SCE-72689">
    <property type="pathway name" value="Formation of a pool of free 40S subunits"/>
</dbReference>
<dbReference type="Reactome" id="R-SCE-72706">
    <property type="pathway name" value="GTP hydrolysis and joining of the 60S ribosomal subunit"/>
</dbReference>
<dbReference type="Reactome" id="R-SCE-975956">
    <property type="pathway name" value="Nonsense Mediated Decay (NMD) independent of the Exon Junction Complex (EJC)"/>
</dbReference>
<dbReference type="Reactome" id="R-SCE-975957">
    <property type="pathway name" value="Nonsense Mediated Decay (NMD) enhanced by the Exon Junction Complex (EJC)"/>
</dbReference>
<dbReference type="BioGRID-ORCS" id="852191">
    <property type="hits" value="3 hits in 10 CRISPR screens"/>
</dbReference>
<dbReference type="BioGRID-ORCS" id="856853">
    <property type="hits" value="5 hits in 10 CRISPR screens"/>
</dbReference>
<dbReference type="PRO" id="PR:P0CX42"/>
<dbReference type="Proteomes" id="UP000002311">
    <property type="component" value="Chromosome V"/>
</dbReference>
<dbReference type="RNAct" id="P0CX42">
    <property type="molecule type" value="protein"/>
</dbReference>
<dbReference type="ExpressionAtlas" id="P0CX42">
    <property type="expression patterns" value="baseline and differential"/>
</dbReference>
<dbReference type="GO" id="GO:0005829">
    <property type="term" value="C:cytosol"/>
    <property type="evidence" value="ECO:0000314"/>
    <property type="project" value="SGD"/>
</dbReference>
<dbReference type="GO" id="GO:0022625">
    <property type="term" value="C:cytosolic large ribosomal subunit"/>
    <property type="evidence" value="ECO:0000314"/>
    <property type="project" value="SGD"/>
</dbReference>
<dbReference type="GO" id="GO:0005634">
    <property type="term" value="C:nucleus"/>
    <property type="evidence" value="ECO:0000314"/>
    <property type="project" value="SGD"/>
</dbReference>
<dbReference type="GO" id="GO:0070180">
    <property type="term" value="F:large ribosomal subunit rRNA binding"/>
    <property type="evidence" value="ECO:0000318"/>
    <property type="project" value="GO_Central"/>
</dbReference>
<dbReference type="GO" id="GO:0003735">
    <property type="term" value="F:structural constituent of ribosome"/>
    <property type="evidence" value="ECO:0000318"/>
    <property type="project" value="GO_Central"/>
</dbReference>
<dbReference type="GO" id="GO:0002181">
    <property type="term" value="P:cytoplasmic translation"/>
    <property type="evidence" value="ECO:0000305"/>
    <property type="project" value="SGD"/>
</dbReference>
<dbReference type="CDD" id="cd00337">
    <property type="entry name" value="Ribosomal_uL14"/>
    <property type="match status" value="1"/>
</dbReference>
<dbReference type="FunFam" id="2.40.150.20:FF:000003">
    <property type="entry name" value="60S ribosomal protein L23"/>
    <property type="match status" value="1"/>
</dbReference>
<dbReference type="Gene3D" id="2.40.150.20">
    <property type="entry name" value="Ribosomal protein L14"/>
    <property type="match status" value="1"/>
</dbReference>
<dbReference type="HAMAP" id="MF_01367">
    <property type="entry name" value="Ribosomal_uL14"/>
    <property type="match status" value="1"/>
</dbReference>
<dbReference type="InterPro" id="IPR000218">
    <property type="entry name" value="Ribosomal_uL14"/>
</dbReference>
<dbReference type="InterPro" id="IPR019972">
    <property type="entry name" value="Ribosomal_uL14_CS"/>
</dbReference>
<dbReference type="InterPro" id="IPR036853">
    <property type="entry name" value="Ribosomal_uL14_sf"/>
</dbReference>
<dbReference type="PANTHER" id="PTHR11761">
    <property type="entry name" value="50S/60S RIBOSOMAL PROTEIN L14/L23"/>
    <property type="match status" value="1"/>
</dbReference>
<dbReference type="PANTHER" id="PTHR11761:SF8">
    <property type="entry name" value="LARGE RIBOSOMAL SUBUNIT PROTEIN UL14"/>
    <property type="match status" value="1"/>
</dbReference>
<dbReference type="Pfam" id="PF00238">
    <property type="entry name" value="Ribosomal_L14"/>
    <property type="match status" value="1"/>
</dbReference>
<dbReference type="SMART" id="SM01374">
    <property type="entry name" value="Ribosomal_L14"/>
    <property type="match status" value="1"/>
</dbReference>
<dbReference type="SUPFAM" id="SSF50193">
    <property type="entry name" value="Ribosomal protein L14"/>
    <property type="match status" value="1"/>
</dbReference>
<dbReference type="PROSITE" id="PS00049">
    <property type="entry name" value="RIBOSOMAL_L14"/>
    <property type="match status" value="1"/>
</dbReference>
<name>RL23B_YEAST</name>